<gene>
    <name evidence="1" type="primary">ttcA1</name>
    <name type="ordered locus">FTA_0803</name>
</gene>
<comment type="function">
    <text evidence="1">Catalyzes the ATP-dependent 2-thiolation of cytidine in position 32 of tRNA, to form 2-thiocytidine (s(2)C32). The sulfur atoms are provided by the cysteine/cysteine desulfurase (IscS) system.</text>
</comment>
<comment type="catalytic activity">
    <reaction evidence="1">
        <text>cytidine(32) in tRNA + S-sulfanyl-L-cysteinyl-[cysteine desulfurase] + AH2 + ATP = 2-thiocytidine(32) in tRNA + L-cysteinyl-[cysteine desulfurase] + A + AMP + diphosphate + H(+)</text>
        <dbReference type="Rhea" id="RHEA:57048"/>
        <dbReference type="Rhea" id="RHEA-COMP:10288"/>
        <dbReference type="Rhea" id="RHEA-COMP:12157"/>
        <dbReference type="Rhea" id="RHEA-COMP:12158"/>
        <dbReference type="Rhea" id="RHEA-COMP:14821"/>
        <dbReference type="ChEBI" id="CHEBI:13193"/>
        <dbReference type="ChEBI" id="CHEBI:15378"/>
        <dbReference type="ChEBI" id="CHEBI:17499"/>
        <dbReference type="ChEBI" id="CHEBI:29950"/>
        <dbReference type="ChEBI" id="CHEBI:30616"/>
        <dbReference type="ChEBI" id="CHEBI:33019"/>
        <dbReference type="ChEBI" id="CHEBI:61963"/>
        <dbReference type="ChEBI" id="CHEBI:82748"/>
        <dbReference type="ChEBI" id="CHEBI:141453"/>
        <dbReference type="ChEBI" id="CHEBI:456215"/>
    </reaction>
    <physiologicalReaction direction="left-to-right" evidence="1">
        <dbReference type="Rhea" id="RHEA:57049"/>
    </physiologicalReaction>
</comment>
<comment type="cofactor">
    <cofactor evidence="1">
        <name>Mg(2+)</name>
        <dbReference type="ChEBI" id="CHEBI:18420"/>
    </cofactor>
</comment>
<comment type="cofactor">
    <cofactor evidence="1">
        <name>[4Fe-4S] cluster</name>
        <dbReference type="ChEBI" id="CHEBI:49883"/>
    </cofactor>
    <text evidence="1">Binds 1 [4Fe-4S] cluster per subunit. The cluster is chelated by three Cys residues, the fourth Fe has a free coordination site that may bind a sulfur atom transferred from the persulfide of IscS.</text>
</comment>
<comment type="pathway">
    <text evidence="1">tRNA modification.</text>
</comment>
<comment type="subunit">
    <text evidence="1">Homodimer.</text>
</comment>
<comment type="subcellular location">
    <subcellularLocation>
        <location evidence="1">Cytoplasm</location>
    </subcellularLocation>
</comment>
<comment type="miscellaneous">
    <text evidence="1">The thiolation reaction likely consists of two steps: a first activation step by ATP to form an adenylated intermediate of the target base of tRNA, and a second nucleophilic substitution step of the sulfur (S) atom supplied by the hydrosulfide attached to the Fe-S cluster.</text>
</comment>
<comment type="similarity">
    <text evidence="1">Belongs to the TtcA family.</text>
</comment>
<name>TTCA1_FRATF</name>
<proteinExistence type="inferred from homology"/>
<reference key="1">
    <citation type="journal article" date="2009" name="PLoS ONE">
        <title>Complete genome sequence of Francisella tularensis subspecies holarctica FTNF002-00.</title>
        <authorList>
            <person name="Barabote R.D."/>
            <person name="Xie G."/>
            <person name="Brettin T.S."/>
            <person name="Hinrichs S.H."/>
            <person name="Fey P.D."/>
            <person name="Jay J.J."/>
            <person name="Engle J.L."/>
            <person name="Godbole S.D."/>
            <person name="Noronha J.M."/>
            <person name="Scheuermann R.H."/>
            <person name="Zhou L.W."/>
            <person name="Lion C."/>
            <person name="Dempsey M.P."/>
        </authorList>
    </citation>
    <scope>NUCLEOTIDE SEQUENCE [LARGE SCALE GENOMIC DNA]</scope>
    <source>
        <strain>FTNF002-00 / FTA</strain>
    </source>
</reference>
<feature type="chain" id="PRO_0000348729" description="tRNA-cytidine(32) 2-sulfurtransferase 1">
    <location>
        <begin position="1"/>
        <end position="251"/>
    </location>
</feature>
<feature type="short sequence motif" description="PP-loop motif" evidence="1">
    <location>
        <begin position="33"/>
        <end position="38"/>
    </location>
</feature>
<feature type="binding site" evidence="1">
    <location>
        <position position="108"/>
    </location>
    <ligand>
        <name>[4Fe-4S] cluster</name>
        <dbReference type="ChEBI" id="CHEBI:49883"/>
    </ligand>
</feature>
<feature type="binding site" evidence="1">
    <location>
        <position position="111"/>
    </location>
    <ligand>
        <name>[4Fe-4S] cluster</name>
        <dbReference type="ChEBI" id="CHEBI:49883"/>
    </ligand>
</feature>
<feature type="binding site" evidence="1">
    <location>
        <position position="199"/>
    </location>
    <ligand>
        <name>[4Fe-4S] cluster</name>
        <dbReference type="ChEBI" id="CHEBI:49883"/>
    </ligand>
</feature>
<keyword id="KW-0004">4Fe-4S</keyword>
<keyword id="KW-0067">ATP-binding</keyword>
<keyword id="KW-0963">Cytoplasm</keyword>
<keyword id="KW-0408">Iron</keyword>
<keyword id="KW-0411">Iron-sulfur</keyword>
<keyword id="KW-0460">Magnesium</keyword>
<keyword id="KW-0479">Metal-binding</keyword>
<keyword id="KW-0547">Nucleotide-binding</keyword>
<keyword id="KW-0694">RNA-binding</keyword>
<keyword id="KW-0808">Transferase</keyword>
<keyword id="KW-0819">tRNA processing</keyword>
<keyword id="KW-0820">tRNA-binding</keyword>
<sequence>MTKTEKKLRHYITKAIADYKLLDKGDKAMLCLSGGKDSFGLLKVLHGLIEDKTYDIDLHVYTLDQSQPGWDDSQLRKYLDDLGVSYEIETKNTYGVVIDKVPEGKTYCSLCSRLRRGNIYRYAKEHKMDKIILGHHRDDLIQSLLMSILYQGQIKSMPPKFVTQDGENTVIRPMVLVQERDLIEFAKEENFPIIPCNLCGSQENLKRKKVKKLIQDLALENPKVPSNILNSLSNVLPSHLMDKNLLNSLEN</sequence>
<accession>A7NBC6</accession>
<evidence type="ECO:0000255" key="1">
    <source>
        <dbReference type="HAMAP-Rule" id="MF_01850"/>
    </source>
</evidence>
<protein>
    <recommendedName>
        <fullName evidence="1">tRNA-cytidine(32) 2-sulfurtransferase 1</fullName>
        <ecNumber evidence="1">2.8.1.-</ecNumber>
    </recommendedName>
    <alternativeName>
        <fullName evidence="1">Two-thiocytidine biosynthesis protein A 1</fullName>
    </alternativeName>
    <alternativeName>
        <fullName evidence="1">tRNA 2-thiocytidine biosynthesis protein TtcA 1</fullName>
    </alternativeName>
</protein>
<dbReference type="EC" id="2.8.1.-" evidence="1"/>
<dbReference type="EMBL" id="CP000803">
    <property type="protein sequence ID" value="ABU61279.1"/>
    <property type="molecule type" value="Genomic_DNA"/>
</dbReference>
<dbReference type="SMR" id="A7NBC6"/>
<dbReference type="KEGG" id="fta:FTA_0803"/>
<dbReference type="HOGENOM" id="CLU_026481_0_0_6"/>
<dbReference type="GO" id="GO:0005737">
    <property type="term" value="C:cytoplasm"/>
    <property type="evidence" value="ECO:0007669"/>
    <property type="project" value="UniProtKB-SubCell"/>
</dbReference>
<dbReference type="GO" id="GO:0051539">
    <property type="term" value="F:4 iron, 4 sulfur cluster binding"/>
    <property type="evidence" value="ECO:0007669"/>
    <property type="project" value="UniProtKB-UniRule"/>
</dbReference>
<dbReference type="GO" id="GO:0005524">
    <property type="term" value="F:ATP binding"/>
    <property type="evidence" value="ECO:0007669"/>
    <property type="project" value="UniProtKB-UniRule"/>
</dbReference>
<dbReference type="GO" id="GO:0000287">
    <property type="term" value="F:magnesium ion binding"/>
    <property type="evidence" value="ECO:0007669"/>
    <property type="project" value="UniProtKB-UniRule"/>
</dbReference>
<dbReference type="GO" id="GO:0016783">
    <property type="term" value="F:sulfurtransferase activity"/>
    <property type="evidence" value="ECO:0007669"/>
    <property type="project" value="UniProtKB-UniRule"/>
</dbReference>
<dbReference type="GO" id="GO:0000049">
    <property type="term" value="F:tRNA binding"/>
    <property type="evidence" value="ECO:0007669"/>
    <property type="project" value="UniProtKB-KW"/>
</dbReference>
<dbReference type="GO" id="GO:0034227">
    <property type="term" value="P:tRNA thio-modification"/>
    <property type="evidence" value="ECO:0007669"/>
    <property type="project" value="UniProtKB-UniRule"/>
</dbReference>
<dbReference type="CDD" id="cd24138">
    <property type="entry name" value="TtcA-like"/>
    <property type="match status" value="1"/>
</dbReference>
<dbReference type="Gene3D" id="3.40.50.620">
    <property type="entry name" value="HUPs"/>
    <property type="match status" value="1"/>
</dbReference>
<dbReference type="HAMAP" id="MF_01850">
    <property type="entry name" value="TtcA"/>
    <property type="match status" value="1"/>
</dbReference>
<dbReference type="InterPro" id="IPR014729">
    <property type="entry name" value="Rossmann-like_a/b/a_fold"/>
</dbReference>
<dbReference type="InterPro" id="IPR011063">
    <property type="entry name" value="TilS/TtcA_N"/>
</dbReference>
<dbReference type="InterPro" id="IPR012089">
    <property type="entry name" value="tRNA_Cyd_32_2_STrfase"/>
</dbReference>
<dbReference type="InterPro" id="IPR035107">
    <property type="entry name" value="tRNA_thiolation_TtcA_Ctu1"/>
</dbReference>
<dbReference type="NCBIfam" id="NF007972">
    <property type="entry name" value="PRK10696.1"/>
    <property type="match status" value="1"/>
</dbReference>
<dbReference type="PANTHER" id="PTHR43686:SF1">
    <property type="entry name" value="AMINOTRAN_5 DOMAIN-CONTAINING PROTEIN"/>
    <property type="match status" value="1"/>
</dbReference>
<dbReference type="PANTHER" id="PTHR43686">
    <property type="entry name" value="SULFURTRANSFERASE-RELATED"/>
    <property type="match status" value="1"/>
</dbReference>
<dbReference type="Pfam" id="PF01171">
    <property type="entry name" value="ATP_bind_3"/>
    <property type="match status" value="1"/>
</dbReference>
<dbReference type="PIRSF" id="PIRSF004976">
    <property type="entry name" value="ATPase_YdaO"/>
    <property type="match status" value="1"/>
</dbReference>
<dbReference type="SUPFAM" id="SSF52402">
    <property type="entry name" value="Adenine nucleotide alpha hydrolases-like"/>
    <property type="match status" value="1"/>
</dbReference>
<organism>
    <name type="scientific">Francisella tularensis subsp. holarctica (strain FTNF002-00 / FTA)</name>
    <dbReference type="NCBI Taxonomy" id="458234"/>
    <lineage>
        <taxon>Bacteria</taxon>
        <taxon>Pseudomonadati</taxon>
        <taxon>Pseudomonadota</taxon>
        <taxon>Gammaproteobacteria</taxon>
        <taxon>Thiotrichales</taxon>
        <taxon>Francisellaceae</taxon>
        <taxon>Francisella</taxon>
    </lineage>
</organism>